<dbReference type="EC" id="5.6.1.7" evidence="1"/>
<dbReference type="EMBL" id="AE015450">
    <property type="protein sequence ID" value="AAP56827.2"/>
    <property type="molecule type" value="Genomic_DNA"/>
</dbReference>
<dbReference type="RefSeq" id="WP_011113726.1">
    <property type="nucleotide sequence ID" value="NC_004829.2"/>
</dbReference>
<dbReference type="SMR" id="Q7MBB2"/>
<dbReference type="GeneID" id="93510307"/>
<dbReference type="KEGG" id="mga:MGA_0152"/>
<dbReference type="PATRIC" id="fig|233150.7.peg.535"/>
<dbReference type="HOGENOM" id="CLU_016503_3_0_14"/>
<dbReference type="OrthoDB" id="9766614at2"/>
<dbReference type="PHI-base" id="PHI:10171"/>
<dbReference type="Proteomes" id="UP000001418">
    <property type="component" value="Chromosome"/>
</dbReference>
<dbReference type="GO" id="GO:0005737">
    <property type="term" value="C:cytoplasm"/>
    <property type="evidence" value="ECO:0007669"/>
    <property type="project" value="UniProtKB-SubCell"/>
</dbReference>
<dbReference type="GO" id="GO:0005524">
    <property type="term" value="F:ATP binding"/>
    <property type="evidence" value="ECO:0007669"/>
    <property type="project" value="UniProtKB-KW"/>
</dbReference>
<dbReference type="GO" id="GO:0140662">
    <property type="term" value="F:ATP-dependent protein folding chaperone"/>
    <property type="evidence" value="ECO:0007669"/>
    <property type="project" value="InterPro"/>
</dbReference>
<dbReference type="GO" id="GO:0016853">
    <property type="term" value="F:isomerase activity"/>
    <property type="evidence" value="ECO:0007669"/>
    <property type="project" value="UniProtKB-KW"/>
</dbReference>
<dbReference type="GO" id="GO:0042026">
    <property type="term" value="P:protein refolding"/>
    <property type="evidence" value="ECO:0007669"/>
    <property type="project" value="InterPro"/>
</dbReference>
<dbReference type="CDD" id="cd03344">
    <property type="entry name" value="GroEL"/>
    <property type="match status" value="1"/>
</dbReference>
<dbReference type="FunFam" id="3.50.7.10:FF:000001">
    <property type="entry name" value="60 kDa chaperonin"/>
    <property type="match status" value="1"/>
</dbReference>
<dbReference type="Gene3D" id="3.50.7.10">
    <property type="entry name" value="GroEL"/>
    <property type="match status" value="1"/>
</dbReference>
<dbReference type="Gene3D" id="1.10.560.10">
    <property type="entry name" value="GroEL-like equatorial domain"/>
    <property type="match status" value="1"/>
</dbReference>
<dbReference type="Gene3D" id="3.30.260.10">
    <property type="entry name" value="TCP-1-like chaperonin intermediate domain"/>
    <property type="match status" value="1"/>
</dbReference>
<dbReference type="InterPro" id="IPR018370">
    <property type="entry name" value="Chaperonin_Cpn60_CS"/>
</dbReference>
<dbReference type="InterPro" id="IPR001844">
    <property type="entry name" value="Cpn60/GroEL"/>
</dbReference>
<dbReference type="InterPro" id="IPR002423">
    <property type="entry name" value="Cpn60/GroEL/TCP-1"/>
</dbReference>
<dbReference type="InterPro" id="IPR027409">
    <property type="entry name" value="GroEL-like_apical_dom_sf"/>
</dbReference>
<dbReference type="InterPro" id="IPR027413">
    <property type="entry name" value="GROEL-like_equatorial_sf"/>
</dbReference>
<dbReference type="InterPro" id="IPR027410">
    <property type="entry name" value="TCP-1-like_intermed_sf"/>
</dbReference>
<dbReference type="NCBIfam" id="TIGR02348">
    <property type="entry name" value="GroEL"/>
    <property type="match status" value="1"/>
</dbReference>
<dbReference type="NCBIfam" id="NF000592">
    <property type="entry name" value="PRK00013.1"/>
    <property type="match status" value="1"/>
</dbReference>
<dbReference type="NCBIfam" id="NF009487">
    <property type="entry name" value="PRK12849.1"/>
    <property type="match status" value="1"/>
</dbReference>
<dbReference type="NCBIfam" id="NF009488">
    <property type="entry name" value="PRK12850.1"/>
    <property type="match status" value="1"/>
</dbReference>
<dbReference type="NCBIfam" id="NF009489">
    <property type="entry name" value="PRK12851.1"/>
    <property type="match status" value="1"/>
</dbReference>
<dbReference type="PANTHER" id="PTHR45633">
    <property type="entry name" value="60 KDA HEAT SHOCK PROTEIN, MITOCHONDRIAL"/>
    <property type="match status" value="1"/>
</dbReference>
<dbReference type="Pfam" id="PF00118">
    <property type="entry name" value="Cpn60_TCP1"/>
    <property type="match status" value="1"/>
</dbReference>
<dbReference type="PRINTS" id="PR00298">
    <property type="entry name" value="CHAPERONIN60"/>
</dbReference>
<dbReference type="SUPFAM" id="SSF52029">
    <property type="entry name" value="GroEL apical domain-like"/>
    <property type="match status" value="1"/>
</dbReference>
<dbReference type="SUPFAM" id="SSF48592">
    <property type="entry name" value="GroEL equatorial domain-like"/>
    <property type="match status" value="1"/>
</dbReference>
<dbReference type="SUPFAM" id="SSF54849">
    <property type="entry name" value="GroEL-intermediate domain like"/>
    <property type="match status" value="1"/>
</dbReference>
<dbReference type="PROSITE" id="PS00296">
    <property type="entry name" value="CHAPERONINS_CPN60"/>
    <property type="match status" value="1"/>
</dbReference>
<comment type="function">
    <text evidence="1">Together with its co-chaperonin GroES, plays an essential role in assisting protein folding. The GroEL-GroES system forms a nano-cage that allows encapsulation of the non-native substrate proteins and provides a physical environment optimized to promote and accelerate protein folding.</text>
</comment>
<comment type="catalytic activity">
    <reaction evidence="1">
        <text>ATP + H2O + a folded polypeptide = ADP + phosphate + an unfolded polypeptide.</text>
        <dbReference type="EC" id="5.6.1.7"/>
    </reaction>
</comment>
<comment type="subunit">
    <text evidence="1">Forms a cylinder of 14 subunits composed of two heptameric rings stacked back-to-back. Interacts with the co-chaperonin GroES.</text>
</comment>
<comment type="subcellular location">
    <subcellularLocation>
        <location evidence="1">Cytoplasm</location>
    </subcellularLocation>
</comment>
<comment type="similarity">
    <text evidence="1 2">Belongs to the chaperonin (HSP60) family.</text>
</comment>
<proteinExistence type="inferred from homology"/>
<protein>
    <recommendedName>
        <fullName evidence="1">Chaperonin GroEL</fullName>
        <ecNumber evidence="1">5.6.1.7</ecNumber>
    </recommendedName>
    <alternativeName>
        <fullName evidence="1">60 kDa chaperonin</fullName>
    </alternativeName>
    <alternativeName>
        <fullName evidence="1">Chaperonin-60</fullName>
        <shortName evidence="1">Cpn60</shortName>
    </alternativeName>
</protein>
<accession>Q7MBB2</accession>
<sequence length="534" mass="56779">MAKELTFEQQARAKLLEGINKLAKAVKITAGPKGRNALIEKKYGAPLIVNDGVTIAREIELKDPVENMGAKLIAEAAISTNDIAGDGTTTATILTHEIVNKAIEAINNGTNPVNLRIGIENAAKLVSEYLTSVSKPIKSIDEITQVGAISSGSKFIGELIAKAMDIVGPSGVISIDDAKSFDTTLDTTDGLEFKGGYSSPYMVTDSEKMLSELANPKILVSLNKINTVKEILPLLEASVESSAPLLIVASDIAEDVVTALAINKLRGTLNVVSVKCAEFGEAQKNTLEDLAISVNTILVDSAAGIEFKDLELNKLGSAEKVIISKDKTTVINGACHKDVLAKYLNNLKAKSANLTSKYDKERITKRIANLSNGVAVIHVGGATEVAQKELKLRIEDALNSTKAAVEEGIVAGGGIALMNAIEVLKQVKESNPEIALGYEIVRSSLTAPARQIIENAGQNSSKIINNIINSKQLGYGYNAETNEFVNMINNGIIDPTKVTKTALEKACSVAALLITTEVAINDELKEEKPSLNHL</sequence>
<reference key="1">
    <citation type="journal article" date="2003" name="Microbiology">
        <title>The complete genome sequence of the avian pathogen Mycoplasma gallisepticum strain R(low).</title>
        <authorList>
            <person name="Papazisi L."/>
            <person name="Gorton T.S."/>
            <person name="Kutish G."/>
            <person name="Markham P.F."/>
            <person name="Browning G.F."/>
            <person name="Nguyen D.K."/>
            <person name="Swartzell S."/>
            <person name="Madan A."/>
            <person name="Mahairas G."/>
            <person name="Geary S.J."/>
        </authorList>
    </citation>
    <scope>NUCLEOTIDE SEQUENCE [LARGE SCALE GENOMIC DNA]</scope>
    <source>
        <strain>R(low / passage 15 / clone 2)</strain>
    </source>
</reference>
<name>CH60_MYCGA</name>
<gene>
    <name evidence="1" type="primary">groEL</name>
    <name evidence="1" type="synonym">groL</name>
    <name type="ordered locus">MYCGA4770</name>
    <name type="ORF">MGA_0152</name>
</gene>
<organism>
    <name type="scientific">Mycoplasmoides gallisepticum (strain R(low / passage 15 / clone 2))</name>
    <name type="common">Mycoplasma gallisepticum</name>
    <dbReference type="NCBI Taxonomy" id="710127"/>
    <lineage>
        <taxon>Bacteria</taxon>
        <taxon>Bacillati</taxon>
        <taxon>Mycoplasmatota</taxon>
        <taxon>Mycoplasmoidales</taxon>
        <taxon>Mycoplasmoidaceae</taxon>
        <taxon>Mycoplasmoides</taxon>
    </lineage>
</organism>
<feature type="chain" id="PRO_0000063429" description="Chaperonin GroEL">
    <location>
        <begin position="1"/>
        <end position="534"/>
    </location>
</feature>
<feature type="binding site" evidence="1">
    <location>
        <begin position="29"/>
        <end position="32"/>
    </location>
    <ligand>
        <name>ATP</name>
        <dbReference type="ChEBI" id="CHEBI:30616"/>
    </ligand>
</feature>
<feature type="binding site" evidence="1">
    <location>
        <begin position="86"/>
        <end position="90"/>
    </location>
    <ligand>
        <name>ATP</name>
        <dbReference type="ChEBI" id="CHEBI:30616"/>
    </ligand>
</feature>
<feature type="binding site" evidence="1">
    <location>
        <position position="413"/>
    </location>
    <ligand>
        <name>ATP</name>
        <dbReference type="ChEBI" id="CHEBI:30616"/>
    </ligand>
</feature>
<feature type="binding site" evidence="1">
    <location>
        <position position="494"/>
    </location>
    <ligand>
        <name>ATP</name>
        <dbReference type="ChEBI" id="CHEBI:30616"/>
    </ligand>
</feature>
<keyword id="KW-0067">ATP-binding</keyword>
<keyword id="KW-0143">Chaperone</keyword>
<keyword id="KW-0963">Cytoplasm</keyword>
<keyword id="KW-0413">Isomerase</keyword>
<keyword id="KW-0547">Nucleotide-binding</keyword>
<keyword id="KW-1185">Reference proteome</keyword>
<evidence type="ECO:0000255" key="1">
    <source>
        <dbReference type="HAMAP-Rule" id="MF_00600"/>
    </source>
</evidence>
<evidence type="ECO:0000305" key="2"/>